<name>MSRA_CORDI</name>
<keyword id="KW-0002">3D-structure</keyword>
<keyword id="KW-0560">Oxidoreductase</keyword>
<keyword id="KW-1185">Reference proteome</keyword>
<dbReference type="EC" id="1.8.4.11" evidence="1"/>
<dbReference type="EMBL" id="BX248360">
    <property type="protein sequence ID" value="CAE50784.1"/>
    <property type="molecule type" value="Genomic_DNA"/>
</dbReference>
<dbReference type="RefSeq" id="WP_010935710.1">
    <property type="nucleotide sequence ID" value="NC_002935.2"/>
</dbReference>
<dbReference type="PDB" id="4D7L">
    <property type="method" value="X-ray"/>
    <property type="resolution" value="1.90 A"/>
    <property type="chains" value="A/B/C=1-220"/>
</dbReference>
<dbReference type="PDBsum" id="4D7L"/>
<dbReference type="SMR" id="Q6NEL2"/>
<dbReference type="STRING" id="257309.DIP2260"/>
<dbReference type="GeneID" id="97333202"/>
<dbReference type="KEGG" id="cdi:DIP2260"/>
<dbReference type="HOGENOM" id="CLU_031040_10_3_11"/>
<dbReference type="EvolutionaryTrace" id="Q6NEL2"/>
<dbReference type="Proteomes" id="UP000002198">
    <property type="component" value="Chromosome"/>
</dbReference>
<dbReference type="GO" id="GO:0005737">
    <property type="term" value="C:cytoplasm"/>
    <property type="evidence" value="ECO:0007669"/>
    <property type="project" value="TreeGrafter"/>
</dbReference>
<dbReference type="GO" id="GO:0036456">
    <property type="term" value="F:L-methionine-(S)-S-oxide reductase activity"/>
    <property type="evidence" value="ECO:0007669"/>
    <property type="project" value="TreeGrafter"/>
</dbReference>
<dbReference type="GO" id="GO:0008113">
    <property type="term" value="F:peptide-methionine (S)-S-oxide reductase activity"/>
    <property type="evidence" value="ECO:0007669"/>
    <property type="project" value="UniProtKB-UniRule"/>
</dbReference>
<dbReference type="GO" id="GO:0034599">
    <property type="term" value="P:cellular response to oxidative stress"/>
    <property type="evidence" value="ECO:0007669"/>
    <property type="project" value="TreeGrafter"/>
</dbReference>
<dbReference type="GO" id="GO:0036211">
    <property type="term" value="P:protein modification process"/>
    <property type="evidence" value="ECO:0007669"/>
    <property type="project" value="UniProtKB-UniRule"/>
</dbReference>
<dbReference type="Gene3D" id="3.30.1060.10">
    <property type="entry name" value="Peptide methionine sulphoxide reductase MsrA"/>
    <property type="match status" value="1"/>
</dbReference>
<dbReference type="HAMAP" id="MF_01401">
    <property type="entry name" value="MsrA"/>
    <property type="match status" value="1"/>
</dbReference>
<dbReference type="InterPro" id="IPR002569">
    <property type="entry name" value="Met_Sox_Rdtase_MsrA_dom"/>
</dbReference>
<dbReference type="InterPro" id="IPR036509">
    <property type="entry name" value="Met_Sox_Rdtase_MsrA_sf"/>
</dbReference>
<dbReference type="InterPro" id="IPR050162">
    <property type="entry name" value="MsrA_MetSO_reductase"/>
</dbReference>
<dbReference type="NCBIfam" id="TIGR00401">
    <property type="entry name" value="msrA"/>
    <property type="match status" value="1"/>
</dbReference>
<dbReference type="PANTHER" id="PTHR42799">
    <property type="entry name" value="MITOCHONDRIAL PEPTIDE METHIONINE SULFOXIDE REDUCTASE"/>
    <property type="match status" value="1"/>
</dbReference>
<dbReference type="PANTHER" id="PTHR42799:SF2">
    <property type="entry name" value="MITOCHONDRIAL PEPTIDE METHIONINE SULFOXIDE REDUCTASE"/>
    <property type="match status" value="1"/>
</dbReference>
<dbReference type="Pfam" id="PF01625">
    <property type="entry name" value="PMSR"/>
    <property type="match status" value="1"/>
</dbReference>
<dbReference type="SUPFAM" id="SSF55068">
    <property type="entry name" value="Peptide methionine sulfoxide reductase"/>
    <property type="match status" value="1"/>
</dbReference>
<accession>Q6NEL2</accession>
<proteinExistence type="evidence at protein level"/>
<feature type="chain" id="PRO_0000138541" description="Peptide methionine sulfoxide reductase MsrA">
    <location>
        <begin position="1"/>
        <end position="220"/>
    </location>
</feature>
<feature type="active site" evidence="1">
    <location>
        <position position="52"/>
    </location>
</feature>
<feature type="helix" evidence="2">
    <location>
        <begin position="13"/>
        <end position="15"/>
    </location>
</feature>
<feature type="strand" evidence="2">
    <location>
        <begin position="24"/>
        <end position="27"/>
    </location>
</feature>
<feature type="turn" evidence="2">
    <location>
        <begin position="32"/>
        <end position="34"/>
    </location>
</feature>
<feature type="strand" evidence="2">
    <location>
        <begin position="44"/>
        <end position="49"/>
    </location>
</feature>
<feature type="helix" evidence="2">
    <location>
        <begin position="53"/>
        <end position="61"/>
    </location>
</feature>
<feature type="strand" evidence="2">
    <location>
        <begin position="66"/>
        <end position="77"/>
    </location>
</feature>
<feature type="helix" evidence="2">
    <location>
        <begin position="83"/>
        <end position="87"/>
    </location>
</feature>
<feature type="turn" evidence="2">
    <location>
        <begin position="88"/>
        <end position="91"/>
    </location>
</feature>
<feature type="strand" evidence="2">
    <location>
        <begin position="94"/>
        <end position="101"/>
    </location>
</feature>
<feature type="turn" evidence="2">
    <location>
        <begin position="103"/>
        <end position="105"/>
    </location>
</feature>
<feature type="helix" evidence="2">
    <location>
        <begin position="108"/>
        <end position="117"/>
    </location>
</feature>
<feature type="strand" evidence="2">
    <location>
        <begin position="124"/>
        <end position="127"/>
    </location>
</feature>
<feature type="strand" evidence="2">
    <location>
        <begin position="130"/>
        <end position="132"/>
    </location>
</feature>
<feature type="helix" evidence="2">
    <location>
        <begin position="133"/>
        <end position="135"/>
    </location>
</feature>
<feature type="strand" evidence="2">
    <location>
        <begin position="138"/>
        <end position="141"/>
    </location>
</feature>
<feature type="helix" evidence="2">
    <location>
        <begin position="146"/>
        <end position="166"/>
    </location>
</feature>
<feature type="strand" evidence="2">
    <location>
        <begin position="175"/>
        <end position="178"/>
    </location>
</feature>
<feature type="helix" evidence="2">
    <location>
        <begin position="179"/>
        <end position="181"/>
    </location>
</feature>
<feature type="strand" evidence="2">
    <location>
        <begin position="182"/>
        <end position="184"/>
    </location>
</feature>
<feature type="helix" evidence="2">
    <location>
        <begin position="192"/>
        <end position="194"/>
    </location>
</feature>
<feature type="helix" evidence="2">
    <location>
        <begin position="197"/>
        <end position="200"/>
    </location>
</feature>
<sequence length="220" mass="23950">MGWLFGAPRLVEEKDALKGGPHPVLPNPQPHAVLGTLRGQPGTETIYIGIGCYWGAEKLFWETPGVVYTSVGFAGGITPNPTYRETCTGRTNHTEIVEVVYDPTQVTFDELVVKAMEAHDPTQGYRQGNDTGTQYRSAIYTAGPNAEQQAQRAREIVEHYAPKLAAAGLGRITTEILPLASTPAGEYYMAEDEHQQYLHKNPLGYCPHHSTGVACGIPEA</sequence>
<protein>
    <recommendedName>
        <fullName evidence="1">Peptide methionine sulfoxide reductase MsrA</fullName>
        <shortName evidence="1">Protein-methionine-S-oxide reductase</shortName>
        <ecNumber evidence="1">1.8.4.11</ecNumber>
    </recommendedName>
    <alternativeName>
        <fullName evidence="1">Peptide-methionine (S)-S-oxide reductase</fullName>
        <shortName evidence="1">Peptide Met(O) reductase</shortName>
    </alternativeName>
</protein>
<comment type="function">
    <text evidence="1">Has an important function as a repair enzyme for proteins that have been inactivated by oxidation. Catalyzes the reversible oxidation-reduction of methionine sulfoxide in proteins to methionine.</text>
</comment>
<comment type="catalytic activity">
    <reaction evidence="1">
        <text>L-methionyl-[protein] + [thioredoxin]-disulfide + H2O = L-methionyl-(S)-S-oxide-[protein] + [thioredoxin]-dithiol</text>
        <dbReference type="Rhea" id="RHEA:14217"/>
        <dbReference type="Rhea" id="RHEA-COMP:10698"/>
        <dbReference type="Rhea" id="RHEA-COMP:10700"/>
        <dbReference type="Rhea" id="RHEA-COMP:12313"/>
        <dbReference type="Rhea" id="RHEA-COMP:12315"/>
        <dbReference type="ChEBI" id="CHEBI:15377"/>
        <dbReference type="ChEBI" id="CHEBI:16044"/>
        <dbReference type="ChEBI" id="CHEBI:29950"/>
        <dbReference type="ChEBI" id="CHEBI:44120"/>
        <dbReference type="ChEBI" id="CHEBI:50058"/>
        <dbReference type="EC" id="1.8.4.11"/>
    </reaction>
</comment>
<comment type="catalytic activity">
    <reaction evidence="1">
        <text>[thioredoxin]-disulfide + L-methionine + H2O = L-methionine (S)-S-oxide + [thioredoxin]-dithiol</text>
        <dbReference type="Rhea" id="RHEA:19993"/>
        <dbReference type="Rhea" id="RHEA-COMP:10698"/>
        <dbReference type="Rhea" id="RHEA-COMP:10700"/>
        <dbReference type="ChEBI" id="CHEBI:15377"/>
        <dbReference type="ChEBI" id="CHEBI:29950"/>
        <dbReference type="ChEBI" id="CHEBI:50058"/>
        <dbReference type="ChEBI" id="CHEBI:57844"/>
        <dbReference type="ChEBI" id="CHEBI:58772"/>
        <dbReference type="EC" id="1.8.4.11"/>
    </reaction>
</comment>
<comment type="similarity">
    <text evidence="1">Belongs to the MsrA Met sulfoxide reductase family.</text>
</comment>
<gene>
    <name evidence="1" type="primary">msrA</name>
    <name type="ordered locus">DIP2260</name>
</gene>
<organism>
    <name type="scientific">Corynebacterium diphtheriae (strain ATCC 700971 / NCTC 13129 / Biotype gravis)</name>
    <dbReference type="NCBI Taxonomy" id="257309"/>
    <lineage>
        <taxon>Bacteria</taxon>
        <taxon>Bacillati</taxon>
        <taxon>Actinomycetota</taxon>
        <taxon>Actinomycetes</taxon>
        <taxon>Mycobacteriales</taxon>
        <taxon>Corynebacteriaceae</taxon>
        <taxon>Corynebacterium</taxon>
    </lineage>
</organism>
<evidence type="ECO:0000255" key="1">
    <source>
        <dbReference type="HAMAP-Rule" id="MF_01401"/>
    </source>
</evidence>
<evidence type="ECO:0007829" key="2">
    <source>
        <dbReference type="PDB" id="4D7L"/>
    </source>
</evidence>
<reference key="1">
    <citation type="journal article" date="2003" name="Nucleic Acids Res.">
        <title>The complete genome sequence and analysis of Corynebacterium diphtheriae NCTC13129.</title>
        <authorList>
            <person name="Cerdeno-Tarraga A.-M."/>
            <person name="Efstratiou A."/>
            <person name="Dover L.G."/>
            <person name="Holden M.T.G."/>
            <person name="Pallen M.J."/>
            <person name="Bentley S.D."/>
            <person name="Besra G.S."/>
            <person name="Churcher C.M."/>
            <person name="James K.D."/>
            <person name="De Zoysa A."/>
            <person name="Chillingworth T."/>
            <person name="Cronin A."/>
            <person name="Dowd L."/>
            <person name="Feltwell T."/>
            <person name="Hamlin N."/>
            <person name="Holroyd S."/>
            <person name="Jagels K."/>
            <person name="Moule S."/>
            <person name="Quail M.A."/>
            <person name="Rabbinowitsch E."/>
            <person name="Rutherford K.M."/>
            <person name="Thomson N.R."/>
            <person name="Unwin L."/>
            <person name="Whitehead S."/>
            <person name="Barrell B.G."/>
            <person name="Parkhill J."/>
        </authorList>
    </citation>
    <scope>NUCLEOTIDE SEQUENCE [LARGE SCALE GENOMIC DNA]</scope>
    <source>
        <strain>ATCC 700971 / NCTC 13129 / Biotype gravis</strain>
    </source>
</reference>